<keyword id="KW-0051">Antiviral defense</keyword>
<keyword id="KW-0256">Endoplasmic reticulum</keyword>
<keyword id="KW-0391">Immunity</keyword>
<keyword id="KW-0399">Innate immunity</keyword>
<keyword id="KW-0472">Membrane</keyword>
<keyword id="KW-1185">Reference proteome</keyword>
<keyword id="KW-0694">RNA-binding</keyword>
<keyword id="KW-0812">Transmembrane</keyword>
<keyword id="KW-1133">Transmembrane helix</keyword>
<feature type="chain" id="PRO_0000160261" description="Inactive 2'-5'-oligoadenylate synthase 1B">
    <location>
        <begin position="1"/>
        <end position="376"/>
    </location>
</feature>
<feature type="topological domain" description="Cytoplasmic" evidence="1">
    <location>
        <begin position="1"/>
        <end position="351"/>
    </location>
</feature>
<feature type="transmembrane region" description="Helical; Anchor for type IV membrane protein" evidence="1">
    <location>
        <begin position="352"/>
        <end position="370"/>
    </location>
</feature>
<feature type="topological domain" description="Extracellular" evidence="1">
    <location>
        <begin position="371"/>
        <end position="376"/>
    </location>
</feature>
<feature type="sequence variant" description="In strain: BID, DHA, MPR." evidence="8">
    <original>A</original>
    <variation>S</variation>
    <location>
        <position position="36"/>
    </location>
</feature>
<feature type="sequence variant" description="In strain: MBT/Pas, PWD/Phj." evidence="3 8">
    <original>S</original>
    <variation>F</variation>
    <location>
        <position position="45"/>
    </location>
</feature>
<feature type="sequence variant" description="In strain: DHA." evidence="8">
    <original>R</original>
    <variation>Q</variation>
    <location>
        <position position="47"/>
    </location>
</feature>
<feature type="sequence variant" description="In strain: DHA." evidence="8">
    <original>V</original>
    <variation>G</variation>
    <location>
        <position position="50"/>
    </location>
</feature>
<feature type="sequence variant" description="In strain: BID, DHA, MPR, MBT/Pas, PWD/Phj." evidence="3 8">
    <original>G</original>
    <variation>C</variation>
    <location>
        <position position="63"/>
    </location>
</feature>
<feature type="sequence variant" description="In strain: BALB/c, BID, C57BL/6J, C3H/He, MBT/Pas, PWD/Phj." evidence="2 3 4 6 8 9 13">
    <original>T</original>
    <variation>A</variation>
    <location>
        <position position="65"/>
    </location>
</feature>
<feature type="sequence variant" description="In strain: BID, DHA, MPR, MBT/Pas, PWD/Phj." evidence="3 8">
    <original>S</original>
    <variation>Y</variation>
    <location>
        <position position="83"/>
    </location>
</feature>
<feature type="sequence variant" description="In strain: DHA." evidence="8">
    <original>Q</original>
    <variation>R</variation>
    <location>
        <position position="90"/>
    </location>
</feature>
<feature type="sequence variant" description="In strain: MBT/Pas, PWD/Phj." evidence="3 8">
    <original>C</original>
    <variation>Y</variation>
    <location>
        <position position="103"/>
    </location>
</feature>
<feature type="sequence variant" description="In strain: DHA." evidence="8">
    <original>V</original>
    <variation>I</variation>
    <location>
        <position position="105"/>
    </location>
</feature>
<feature type="sequence variant" description="In strain: MPR, DHA, MBT/Pas, PWD/Phj." evidence="3 8">
    <original>C</original>
    <variation>F</variation>
    <location>
        <position position="111"/>
    </location>
</feature>
<feature type="sequence variant" description="In strain: MPR, MBT/Pas, PWD/Phj." evidence="3 8">
    <original>H</original>
    <variation>Q</variation>
    <location>
        <position position="118"/>
    </location>
</feature>
<feature type="sequence variant" description="In strain: BID, MPR." evidence="8">
    <original>L</original>
    <variation>V</variation>
    <location>
        <position position="151"/>
    </location>
</feature>
<feature type="sequence variant" description="In strain: MBT/Pas, PWD/Phj." evidence="3 8">
    <original>P</original>
    <variation>L</variation>
    <location>
        <position position="176"/>
    </location>
</feature>
<feature type="sequence variant" description="In strain: DHA." evidence="8">
    <original>K</original>
    <variation>E</variation>
    <location>
        <position position="181"/>
    </location>
</feature>
<feature type="sequence variant" description="In strain: BID, MBT/Pas, PWD/Phj." evidence="3 8">
    <original>S</original>
    <variation>L</variation>
    <location>
        <position position="183"/>
    </location>
</feature>
<feature type="sequence variant" description="In strain: BID, DHA, MBT/Pas, PWD/Phj." evidence="3 8">
    <original>I</original>
    <variation>T</variation>
    <location>
        <position position="184"/>
    </location>
</feature>
<feature type="sequence variant" description="In strain: BALB/c, C57BL/6J, C3H/He." evidence="2 3 4 6 9 13">
    <original>R</original>
    <variation>Q</variation>
    <location>
        <position position="190"/>
    </location>
</feature>
<feature type="sequence variant" description="In strain: MBT/Pas, PWD/Phj." evidence="3 8">
    <original>R</original>
    <variation>H</variation>
    <location>
        <position position="206"/>
    </location>
</feature>
<feature type="sequence variant" description="In the truncated form.">
    <location>
        <begin position="253"/>
        <end position="376"/>
    </location>
</feature>
<feature type="sequence variant" description="In strain: BID, C3H/RV, DHA, MPR, MBT/Pas, PWD/Phj." evidence="2 3 8">
    <original>Q</original>
    <variation>R</variation>
    <location>
        <position position="266"/>
    </location>
</feature>
<feature type="sequence variant" description="In strain: BID." evidence="8">
    <original>H</original>
    <variation>L</variation>
    <location>
        <position position="277"/>
    </location>
</feature>
<feature type="sequence variant" description="In strain: DHA." evidence="8">
    <original>Q</original>
    <variation>P</variation>
    <location>
        <position position="278"/>
    </location>
</feature>
<feature type="sequence variant" description="In strain: DHA." evidence="8">
    <original>D</original>
    <variation>V</variation>
    <location>
        <position position="291"/>
    </location>
</feature>
<feature type="sequence variant" description="In strain: MPR." evidence="8">
    <original>A</original>
    <variation>V</variation>
    <location>
        <position position="299"/>
    </location>
</feature>
<feature type="sequence variant" description="In strain: MPR." evidence="8">
    <original>I</original>
    <variation>V</variation>
    <location>
        <position position="305"/>
    </location>
</feature>
<feature type="sequence variant" description="In strain: C3H/RV." evidence="2">
    <original>A</original>
    <variation>T</variation>
    <location>
        <position position="322"/>
    </location>
</feature>
<feature type="sequence variant" description="In strain: C3H/RV, DHA, MPR, MBT/Pas, PWD/Phj." evidence="2 3 8">
    <original>S</original>
    <variation>P</variation>
    <location>
        <position position="336"/>
    </location>
</feature>
<feature type="sequence variant" description="In strain: DHA, MBT/Pas, PWD/Phj." evidence="3 8">
    <original>G</original>
    <variation>A</variation>
    <location>
        <position position="347"/>
    </location>
</feature>
<feature type="sequence variant" description="In strain: BID, DHA, MBT/Pas, PWD/Phj." evidence="3 8">
    <original>M</original>
    <variation>T</variation>
    <location>
        <position position="350"/>
    </location>
</feature>
<feature type="sequence variant" description="In strain: BID, C3H/RV, DHA, MPR, MBT/Pas, PWD/Phj." evidence="2 3 8">
    <original>L</original>
    <variation>F</variation>
    <location>
        <position position="354"/>
    </location>
</feature>
<feature type="sequence variant" description="In strain: MPR." evidence="8">
    <original>F</original>
    <variation>L</variation>
    <location>
        <position position="368"/>
    </location>
</feature>
<feature type="sequence conflict" description="In Ref. 7; CAA39455." evidence="14" ref="7">
    <original>GVK</original>
    <variation>VFQ</variation>
    <location>
        <begin position="58"/>
        <end position="60"/>
    </location>
</feature>
<feature type="sequence conflict" description="In Ref. 1; BAB84129 and 7; CAA39455." evidence="14" ref="1 7">
    <original>VY</original>
    <variation>LD</variation>
    <location>
        <begin position="234"/>
        <end position="235"/>
    </location>
</feature>
<evidence type="ECO:0000255" key="1"/>
<evidence type="ECO:0000269" key="2">
    <source>
    </source>
</evidence>
<evidence type="ECO:0000269" key="3">
    <source>
    </source>
</evidence>
<evidence type="ECO:0000269" key="4">
    <source>
    </source>
</evidence>
<evidence type="ECO:0000269" key="5">
    <source>
    </source>
</evidence>
<evidence type="ECO:0000269" key="6">
    <source>
    </source>
</evidence>
<evidence type="ECO:0000269" key="7">
    <source>
    </source>
</evidence>
<evidence type="ECO:0000269" key="8">
    <source>
    </source>
</evidence>
<evidence type="ECO:0000269" key="9">
    <source>
    </source>
</evidence>
<evidence type="ECO:0000269" key="10">
    <source>
    </source>
</evidence>
<evidence type="ECO:0000269" key="11">
    <source>
    </source>
</evidence>
<evidence type="ECO:0000269" key="12">
    <source>
    </source>
</evidence>
<evidence type="ECO:0000269" key="13">
    <source ref="6"/>
</evidence>
<evidence type="ECO:0000305" key="14"/>
<evidence type="ECO:0000305" key="15">
    <source>
    </source>
</evidence>
<organism>
    <name type="scientific">Mus musculus</name>
    <name type="common">Mouse</name>
    <dbReference type="NCBI Taxonomy" id="10090"/>
    <lineage>
        <taxon>Eukaryota</taxon>
        <taxon>Metazoa</taxon>
        <taxon>Chordata</taxon>
        <taxon>Craniata</taxon>
        <taxon>Vertebrata</taxon>
        <taxon>Euteleostomi</taxon>
        <taxon>Mammalia</taxon>
        <taxon>Eutheria</taxon>
        <taxon>Euarchontoglires</taxon>
        <taxon>Glires</taxon>
        <taxon>Rodentia</taxon>
        <taxon>Myomorpha</taxon>
        <taxon>Muroidea</taxon>
        <taxon>Muridae</taxon>
        <taxon>Murinae</taxon>
        <taxon>Mus</taxon>
        <taxon>Mus</taxon>
    </lineage>
</organism>
<accession>Q60856</accession>
<accession>A8YPE5</accession>
<accession>A8YPE7</accession>
<accession>A8YPE8</accession>
<accession>A8YPE9</accession>
<accession>E9QKP6</accession>
<accession>Q78ZX0</accession>
<accession>Q8JZN0</accession>
<accession>Q8JZN4</accession>
<accession>Q8VI98</accession>
<dbReference type="EMBL" id="AB067529">
    <property type="protein sequence ID" value="BAB84129.1"/>
    <property type="status" value="ALT_FRAME"/>
    <property type="molecule type" value="mRNA"/>
</dbReference>
<dbReference type="EMBL" id="AF328926">
    <property type="protein sequence ID" value="AAM47542.1"/>
    <property type="molecule type" value="mRNA"/>
</dbReference>
<dbReference type="EMBL" id="AF418004">
    <property type="protein sequence ID" value="AAM47544.1"/>
    <property type="molecule type" value="mRNA"/>
</dbReference>
<dbReference type="EMBL" id="AF418005">
    <property type="protein sequence ID" value="AAM47545.1"/>
    <property type="molecule type" value="mRNA"/>
</dbReference>
<dbReference type="EMBL" id="AF481734">
    <property type="protein sequence ID" value="AAM49738.1"/>
    <property type="molecule type" value="Genomic_DNA"/>
</dbReference>
<dbReference type="EMBL" id="AF466822">
    <property type="protein sequence ID" value="AAM97603.1"/>
    <property type="molecule type" value="mRNA"/>
</dbReference>
<dbReference type="EMBL" id="AF466823">
    <property type="protein sequence ID" value="AAM97604.1"/>
    <property type="molecule type" value="mRNA"/>
</dbReference>
<dbReference type="EMBL" id="AM887907">
    <property type="protein sequence ID" value="CAP12708.1"/>
    <property type="molecule type" value="Genomic_DNA"/>
</dbReference>
<dbReference type="EMBL" id="AM887915">
    <property type="protein sequence ID" value="CAP12714.1"/>
    <property type="molecule type" value="Genomic_DNA"/>
</dbReference>
<dbReference type="EMBL" id="AM887917">
    <property type="protein sequence ID" value="CAP12716.1"/>
    <property type="molecule type" value="Genomic_DNA"/>
</dbReference>
<dbReference type="EMBL" id="AM887918">
    <property type="protein sequence ID" value="CAP12717.1"/>
    <property type="molecule type" value="Genomic_DNA"/>
</dbReference>
<dbReference type="EMBL" id="AM887919">
    <property type="protein sequence ID" value="CAP12718.1"/>
    <property type="molecule type" value="Genomic_DNA"/>
</dbReference>
<dbReference type="EMBL" id="AC115937">
    <property type="status" value="NOT_ANNOTATED_CDS"/>
    <property type="molecule type" value="Genomic_DNA"/>
</dbReference>
<dbReference type="EMBL" id="CH466529">
    <property type="protein sequence ID" value="EDL19747.1"/>
    <property type="molecule type" value="Genomic_DNA"/>
</dbReference>
<dbReference type="EMBL" id="X55982">
    <property type="protein sequence ID" value="CAA39455.1"/>
    <property type="status" value="ALT_FRAME"/>
    <property type="molecule type" value="mRNA"/>
</dbReference>
<dbReference type="PIR" id="S15661">
    <property type="entry name" value="S15661"/>
</dbReference>
<dbReference type="RefSeq" id="NP_001077394.1">
    <property type="nucleotide sequence ID" value="NM_001083925.1"/>
</dbReference>
<dbReference type="SMR" id="Q60856"/>
<dbReference type="BioGRID" id="204822">
    <property type="interactions" value="2"/>
</dbReference>
<dbReference type="FunCoup" id="Q60856">
    <property type="interactions" value="16"/>
</dbReference>
<dbReference type="GlyGen" id="Q60856">
    <property type="glycosylation" value="2 sites"/>
</dbReference>
<dbReference type="PeptideAtlas" id="Q60856"/>
<dbReference type="ProteomicsDB" id="291932"/>
<dbReference type="DNASU" id="23961"/>
<dbReference type="GeneID" id="23961"/>
<dbReference type="KEGG" id="mmu:23961"/>
<dbReference type="UCSC" id="uc008zie.1">
    <property type="organism name" value="mouse"/>
</dbReference>
<dbReference type="AGR" id="MGI:97430"/>
<dbReference type="CTD" id="23961"/>
<dbReference type="MGI" id="MGI:97430">
    <property type="gene designation" value="Oas1b"/>
</dbReference>
<dbReference type="InParanoid" id="Q60856"/>
<dbReference type="BRENDA" id="2.7.7.84">
    <property type="organism ID" value="3474"/>
</dbReference>
<dbReference type="BioGRID-ORCS" id="23961">
    <property type="hits" value="0 hits in 22 CRISPR screens"/>
</dbReference>
<dbReference type="ChiTaRS" id="Oas1g">
    <property type="organism name" value="mouse"/>
</dbReference>
<dbReference type="PRO" id="PR:Q60856"/>
<dbReference type="Proteomes" id="UP000000589">
    <property type="component" value="Unplaced"/>
</dbReference>
<dbReference type="RNAct" id="Q60856">
    <property type="molecule type" value="protein"/>
</dbReference>
<dbReference type="GO" id="GO:0005789">
    <property type="term" value="C:endoplasmic reticulum membrane"/>
    <property type="evidence" value="ECO:0000314"/>
    <property type="project" value="UniProtKB"/>
</dbReference>
<dbReference type="GO" id="GO:0003725">
    <property type="term" value="F:double-stranded RNA binding"/>
    <property type="evidence" value="ECO:0000314"/>
    <property type="project" value="UniProtKB"/>
</dbReference>
<dbReference type="GO" id="GO:0051607">
    <property type="term" value="P:defense response to virus"/>
    <property type="evidence" value="ECO:0007669"/>
    <property type="project" value="UniProtKB-KW"/>
</dbReference>
<dbReference type="GO" id="GO:0045087">
    <property type="term" value="P:innate immune response"/>
    <property type="evidence" value="ECO:0007669"/>
    <property type="project" value="UniProtKB-KW"/>
</dbReference>
<dbReference type="GO" id="GO:0045071">
    <property type="term" value="P:negative regulation of viral genome replication"/>
    <property type="evidence" value="ECO:0000314"/>
    <property type="project" value="UniProtKB"/>
</dbReference>
<dbReference type="GO" id="GO:0009615">
    <property type="term" value="P:response to virus"/>
    <property type="evidence" value="ECO:0000314"/>
    <property type="project" value="UniProtKB"/>
</dbReference>
<dbReference type="FunFam" id="1.10.1410.20:FF:000001">
    <property type="entry name" value="2'-5'-oligoadenylate synthetase 1"/>
    <property type="match status" value="1"/>
</dbReference>
<dbReference type="FunFam" id="3.30.460.10:FF:000007">
    <property type="entry name" value="2'-5'-oligoadenylate synthetase 1"/>
    <property type="match status" value="1"/>
</dbReference>
<dbReference type="Gene3D" id="1.10.1410.20">
    <property type="entry name" value="2'-5'-oligoadenylate synthetase 1, domain 2"/>
    <property type="match status" value="1"/>
</dbReference>
<dbReference type="Gene3D" id="3.30.460.10">
    <property type="entry name" value="Beta Polymerase, domain 2"/>
    <property type="match status" value="1"/>
</dbReference>
<dbReference type="InterPro" id="IPR018952">
    <property type="entry name" value="2-5-oligoAdlate_synth_1_dom2/C"/>
</dbReference>
<dbReference type="InterPro" id="IPR006117">
    <property type="entry name" value="2-5OAS_C_CS"/>
</dbReference>
<dbReference type="InterPro" id="IPR043519">
    <property type="entry name" value="NT_sf"/>
</dbReference>
<dbReference type="PANTHER" id="PTHR11258">
    <property type="entry name" value="2-5 OLIGOADENYLATE SYNTHETASE"/>
    <property type="match status" value="1"/>
</dbReference>
<dbReference type="PANTHER" id="PTHR11258:SF19">
    <property type="entry name" value="INACTIVE 2'-5'-OLIGOADENYLATE SYNTHASE 1B"/>
    <property type="match status" value="1"/>
</dbReference>
<dbReference type="Pfam" id="PF10421">
    <property type="entry name" value="OAS1_C"/>
    <property type="match status" value="1"/>
</dbReference>
<dbReference type="SUPFAM" id="SSF81301">
    <property type="entry name" value="Nucleotidyltransferase"/>
    <property type="match status" value="1"/>
</dbReference>
<dbReference type="SUPFAM" id="SSF81631">
    <property type="entry name" value="PAP/OAS1 substrate-binding domain"/>
    <property type="match status" value="1"/>
</dbReference>
<dbReference type="PROSITE" id="PS00833">
    <property type="entry name" value="25A_SYNTH_2"/>
    <property type="match status" value="1"/>
</dbReference>
<dbReference type="PROSITE" id="PS50152">
    <property type="entry name" value="25A_SYNTH_3"/>
    <property type="match status" value="1"/>
</dbReference>
<sequence length="376" mass="43620">MEQDLRSIPASKLDKFIENHLPDTSFCADLREVIDALCALLKDRSFRGPVRRMRASKGVKGKGTTLKGRSDADLVVFLNNLTSFEDQLNQQGVLIKEIKKQLCEVQHERRCGVKFEVHSLRSPNSRALSFKLSAPDLLKEVKFDVLPAYDLLDHLNILKKPNQQFYANLISGRTPPGKEGKLSICFMGLRKYFLNCRPTKLKRLIRLVTHWYQLCKEKLGDPLPPQYALELLTVYAWEYGSRVTKFNTAQGFRTVLELVTKYKQLQIYWTVYYDFRHQEVSEYLHQQLKKDRPVILDPADPTRNIAGLNPKDWRRLAGEAAAWLQYPCFKYRDGSSVCSWEVPTEVGVPMKYLLCRIFWLLFWSLFHFIFGKTSSG</sequence>
<reference key="1">
    <citation type="journal article" date="2002" name="J. Interferon Cytokine Res.">
        <title>Genomic structure of the mouse 2',5'-oligoadenylate synthetase gene family.</title>
        <authorList>
            <person name="Kakuta S."/>
            <person name="Shibata S."/>
            <person name="Iwakura Y."/>
        </authorList>
    </citation>
    <scope>NUCLEOTIDE SEQUENCE [MRNA] (TRUNCATED FORM)</scope>
    <scope>FUNCTION</scope>
    <scope>TISSUE SPECIFICITY</scope>
    <scope>VARIANT ALA-65</scope>
    <scope>VARIANT GLN-190</scope>
    <source>
        <strain>C57BL/6J</strain>
        <tissue>Spleen</tissue>
    </source>
</reference>
<reference key="2">
    <citation type="journal article" date="2002" name="Proc. Natl. Acad. Sci. U.S.A.">
        <title>Positional cloning of the murine flavivirus resistance gene.</title>
        <authorList>
            <person name="Perelygin A.A."/>
            <person name="Scherbik S.V."/>
            <person name="Zhulin I.B."/>
            <person name="Stockman B.M."/>
            <person name="Li Y."/>
            <person name="Brinton M.A."/>
        </authorList>
    </citation>
    <scope>NUCLEOTIDE SEQUENCE [MRNA] (LONG AND TRUNCATED FORM)</scope>
    <scope>FUNCTION</scope>
    <scope>TISSUE SPECIFICITY</scope>
    <scope>POLYMORPHISM</scope>
    <scope>VARIANT ALA-65</scope>
    <scope>VARIANT GLN-190</scope>
    <scope>VARIANT ARG-266</scope>
    <scope>VARIANT THR-322</scope>
    <scope>VARIANT PRO-336</scope>
    <scope>VARIANT PHE-354</scope>
    <source>
        <strain>C3H/He</strain>
        <strain>C3H/RV</strain>
    </source>
</reference>
<reference key="3">
    <citation type="journal article" date="2002" name="Proc. Natl. Acad. Sci. U.S.A.">
        <title>A nonsense mutation in the gene encoding 2'-5'-oligoadenylate synthetase/L1 isoform is associated with West Nile virus susceptibility in laboratory mice.</title>
        <authorList>
            <person name="Mashimo T."/>
            <person name="Lucas M."/>
            <person name="Simon-Chazottes D."/>
            <person name="Frenkiel M.P."/>
            <person name="Montagutelli X."/>
            <person name="Ceccaldi P.E."/>
            <person name="Deubel V."/>
            <person name="Guenet J.L."/>
            <person name="Despres P."/>
        </authorList>
    </citation>
    <scope>NUCLEOTIDE SEQUENCE [MRNA] (LONG AND TRUNCATED FORM)</scope>
    <scope>POLYMORPHISM</scope>
    <scope>VARIANT PHE-45</scope>
    <scope>VARIANT CYS-63</scope>
    <scope>VARIANT ALA-65</scope>
    <scope>VARIANT TYR-83</scope>
    <scope>VARIANT TYR-103</scope>
    <scope>VARIANT PHE-111</scope>
    <scope>VARIANT GLN-118</scope>
    <scope>VARIANT LEU-176</scope>
    <scope>VARIANT LEU-183</scope>
    <scope>VARIANT THR-184</scope>
    <scope>VARIANT GLN-190</scope>
    <scope>VARIANT HIS-206</scope>
    <scope>VARIANT ARG-266</scope>
    <scope>VARIANT PRO-336</scope>
    <scope>VARIANT ALA-347</scope>
    <scope>VARIANT THR-350</scope>
    <scope>VARIANT PHE-354</scope>
    <source>
        <strain>BALB/cJ</strain>
        <strain>MBT/Pas</strain>
    </source>
</reference>
<reference key="4">
    <citation type="journal article" date="2008" name="Mol. Biol. Evol.">
        <title>Long-term balancing selection at the west nile virus resistance gene, Oas1b, maintains transspecific polymorphisms in the house mouse.</title>
        <authorList>
            <person name="Ferguson W."/>
            <person name="Dvora S."/>
            <person name="Gallo J."/>
            <person name="Orth A."/>
            <person name="Boissinot S."/>
        </authorList>
    </citation>
    <scope>NUCLEOTIDE SEQUENCE [MRNA] (LONG FORM)</scope>
    <scope>VARIANT SER-36</scope>
    <scope>VARIANT PHE-45</scope>
    <scope>VARIANT GLN-47</scope>
    <scope>VARIANT GLY-50</scope>
    <scope>VARIANT CYS-63</scope>
    <scope>VARIANT ALA-65</scope>
    <scope>VARIANT TYR-83</scope>
    <scope>VARIANT ARG-90</scope>
    <scope>VARIANT TYR-103</scope>
    <scope>VARIANT ILE-105</scope>
    <scope>VARIANT PHE-111</scope>
    <scope>VARIANT GLN-118</scope>
    <scope>VARIANT VAL-151</scope>
    <scope>VARIANT LEU-176</scope>
    <scope>VARIANT GLU-181</scope>
    <scope>VARIANT LEU-183</scope>
    <scope>VARIANT THR-184</scope>
    <scope>VARIANT HIS-206</scope>
    <scope>VARIANT ARG-266</scope>
    <scope>VARIANT LEU-277</scope>
    <scope>VARIANT PRO-278</scope>
    <scope>VARIANT VAL-291</scope>
    <scope>VARIANT VAL-299</scope>
    <scope>VARIANT VAL-305</scope>
    <scope>VARIANT PRO-336</scope>
    <scope>VARIANT ALA-347</scope>
    <scope>VARIANT THR-350</scope>
    <scope>VARIANT PHE-354</scope>
    <scope>VARIANT LEU-368</scope>
    <source>
        <strain>BID</strain>
        <strain>DHA</strain>
        <strain>MPR</strain>
        <strain>PWD/PhJ</strain>
        <strain>TEH</strain>
    </source>
</reference>
<reference key="5">
    <citation type="journal article" date="2009" name="PLoS Biol.">
        <title>Lineage-specific biology revealed by a finished genome assembly of the mouse.</title>
        <authorList>
            <person name="Church D.M."/>
            <person name="Goodstadt L."/>
            <person name="Hillier L.W."/>
            <person name="Zody M.C."/>
            <person name="Goldstein S."/>
            <person name="She X."/>
            <person name="Bult C.J."/>
            <person name="Agarwala R."/>
            <person name="Cherry J.L."/>
            <person name="DiCuccio M."/>
            <person name="Hlavina W."/>
            <person name="Kapustin Y."/>
            <person name="Meric P."/>
            <person name="Maglott D."/>
            <person name="Birtle Z."/>
            <person name="Marques A.C."/>
            <person name="Graves T."/>
            <person name="Zhou S."/>
            <person name="Teague B."/>
            <person name="Potamousis K."/>
            <person name="Churas C."/>
            <person name="Place M."/>
            <person name="Herschleb J."/>
            <person name="Runnheim R."/>
            <person name="Forrest D."/>
            <person name="Amos-Landgraf J."/>
            <person name="Schwartz D.C."/>
            <person name="Cheng Z."/>
            <person name="Lindblad-Toh K."/>
            <person name="Eichler E.E."/>
            <person name="Ponting C.P."/>
        </authorList>
    </citation>
    <scope>NUCLEOTIDE SEQUENCE [LARGE SCALE GENOMIC DNA]</scope>
    <scope>VARIANT ALA-65</scope>
    <scope>VARIANT GLN-190</scope>
    <source>
        <strain>C57BL/6J</strain>
    </source>
</reference>
<reference key="6">
    <citation type="submission" date="2005-09" db="EMBL/GenBank/DDBJ databases">
        <authorList>
            <person name="Mural R.J."/>
            <person name="Adams M.D."/>
            <person name="Myers E.W."/>
            <person name="Smith H.O."/>
            <person name="Venter J.C."/>
        </authorList>
    </citation>
    <scope>NUCLEOTIDE SEQUENCE [LARGE SCALE GENOMIC DNA]</scope>
    <scope>VARIANT ALA-65</scope>
    <scope>VARIANT GLN-190</scope>
</reference>
<reference key="7">
    <citation type="journal article" date="1991" name="Nucleic Acids Res.">
        <title>The murine 2-5A synthetase locus: three distinct transcripts from two linked genes.</title>
        <authorList>
            <person name="Rutherford M.N."/>
            <person name="Kumar A."/>
            <person name="Nissim A."/>
            <person name="Chebath J."/>
            <person name="Williams B.R.G."/>
        </authorList>
    </citation>
    <scope>NUCLEOTIDE SEQUENCE [MRNA] OF 58-249</scope>
    <scope>VARIANT ALA-65</scope>
    <scope>VARIANT GLN-190</scope>
</reference>
<reference key="8">
    <citation type="journal article" date="2006" name="J. Biol. Chem.">
        <title>The 2',5'-oligoadenylate synthetase 1b is a potent inhibitor of West Nile virus replication inside infected cells.</title>
        <authorList>
            <person name="Kajaste-Rudnitski A."/>
            <person name="Mashimo T."/>
            <person name="Frenkiel M.P."/>
            <person name="Guenet J.L."/>
            <person name="Lucas M."/>
            <person name="Despres P."/>
        </authorList>
    </citation>
    <scope>FUNCTION</scope>
</reference>
<reference key="9">
    <citation type="journal article" date="2006" name="J. Mol. Evol.">
        <title>The mammalian 2'-5' oligoadenylate synthetase gene family: evidence for concerted evolution of paralogous Oas1 genes in Rodentia and Artiodactyla.</title>
        <authorList>
            <person name="Perelygin A.A."/>
            <person name="Zharkikh A.A."/>
            <person name="Scherbik S.V."/>
            <person name="Brinton M.A."/>
        </authorList>
    </citation>
    <scope>REVIEW</scope>
</reference>
<reference key="10">
    <citation type="journal article" date="2007" name="Virology">
        <title>Knock-in of the Oas1b(r) allele into a flavivirus-induced disease susceptible mouse generates the resistant phenotype.</title>
        <authorList>
            <person name="Scherbik S.V."/>
            <person name="Kluetzman K."/>
            <person name="Perelygin A.A."/>
            <person name="Brinton M.A."/>
        </authorList>
    </citation>
    <scope>FUNCTION</scope>
    <scope>POLYMORPHISM</scope>
</reference>
<reference key="11">
    <citation type="journal article" date="2012" name="J. Virol.">
        <title>Identification of novel host cell binding partners of Oas1b, the protein conferring resistance to flavivirus-induced disease in mice.</title>
        <authorList>
            <person name="Courtney S.C."/>
            <person name="Di H."/>
            <person name="Stockman B.M."/>
            <person name="Liu H."/>
            <person name="Scherbik S.V."/>
            <person name="Brinton M.A."/>
        </authorList>
    </citation>
    <scope>SUBCELLULAR LOCATION</scope>
    <scope>INTERACTION WITH OSBPL1A AND ABCF3</scope>
</reference>
<reference key="12">
    <citation type="journal article" date="2012" name="Virology">
        <title>Activation of Oas1a gene expression by type I IFN requires both STAT1 and STAT2 while only STAT2 is required for Oas1b activation.</title>
        <authorList>
            <person name="Pulit-Penaloza J.A."/>
            <person name="Scherbik S.V."/>
            <person name="Brinton M.A."/>
        </authorList>
    </citation>
    <scope>INDUCTION</scope>
</reference>
<reference key="13">
    <citation type="journal article" date="2016" name="Infect. Genet. Evol.">
        <title>The role of mouse 2',5'-oligoadenylate synthetase 1 paralogs.</title>
        <authorList>
            <person name="Elkhateeb E."/>
            <person name="Tag-El-Din-Hassan H.T."/>
            <person name="Sasaki N."/>
            <person name="Torigoe D."/>
            <person name="Morimatsu M."/>
            <person name="Agui T."/>
        </authorList>
    </citation>
    <scope>FUNCTION</scope>
    <scope>TISSUE SPECIFICITY</scope>
    <scope>DEVELOPMENTAL STAGE</scope>
    <scope>INDUCTION</scope>
</reference>
<name>OAS1B_MOUSE</name>
<gene>
    <name type="primary">Oas1b</name>
    <name type="synonym">Flv</name>
    <name type="synonym">Oias2</name>
</gene>
<proteinExistence type="evidence at protein level"/>
<protein>
    <recommendedName>
        <fullName>Inactive 2'-5'-oligoadenylate synthase 1B</fullName>
        <shortName>(2-5')oligo(A) synthase 1B</shortName>
        <shortName>2-5A synthase 1B</shortName>
    </recommendedName>
    <alternativeName>
        <fullName>2'-5'-oligoadenylate synthase-like protein 1</fullName>
    </alternativeName>
</protein>
<comment type="function">
    <text evidence="2 4 5 7 12">Does not have 2'-5'-OAS activity, but can bind double-stranded RNA (PubMed:12396720, PubMed:27663720). The full-length protein displays antiviral activity against flaviviruses such as west Nile virus (WNV) via an alternative antiviral pathway independent of RNase L (PubMed:12080145, PubMed:16371364, PubMed:17904183, PubMed:27663720). The truncated form of the protein lacks antiviral activity (PubMed:12080145, PubMed:16371364, PubMed:17904183).</text>
</comment>
<comment type="subunit">
    <text evidence="11">Interacts with OSBPL1A and ABCF3.</text>
</comment>
<comment type="subcellular location">
    <subcellularLocation>
        <location evidence="15">Endoplasmic reticulum membrane</location>
        <topology evidence="15">Single-pass type IV membrane protein</topology>
    </subcellularLocation>
</comment>
<comment type="tissue specificity">
    <text evidence="3 4 12">Highly expressed in lung, spleen and thymus (PubMed:12186974, PubMed:12396720). Also detected at lower levels in heart, kidney, liver, lung, skeletal muscle, testes, uterus and ovaries (PubMed:12186974, PubMed:12396720, PubMed:27663720).</text>
</comment>
<comment type="developmental stage">
    <text evidence="12">Detected 1 week after birth in developing skin, testes, ovary, kidney and lung.</text>
</comment>
<comment type="induction">
    <text evidence="4 10 12">Up-regulated by the type I interferon IFNB1, in a STAT2-dependent manner (PubMed:22305621). Induced by polyinosinic:polycytidylic acid (poly I:C) (PubMed:12396720, PubMed:27663720).</text>
</comment>
<comment type="polymorphism">
    <text evidence="2 3 7">A nonsense mutation in exon 4 results in a premature stop codon leading to a truncated form which determines the resistant/susceptible phenotype of the mice to flaviviruses. Mice encoding the full-length protein show a flavivirus resistance phenotype (Flv(r)), whereas mice encoding a C-terminally truncated protein show a flavivirus susceptible phenotype (Flv(s)).</text>
</comment>
<comment type="similarity">
    <text evidence="14">Belongs to the 2-5A synthase family.</text>
</comment>
<comment type="sequence caution" evidence="14">
    <conflict type="frameshift">
        <sequence resource="EMBL-CDS" id="BAB84129"/>
    </conflict>
</comment>
<comment type="sequence caution" evidence="14">
    <conflict type="frameshift">
        <sequence resource="EMBL-CDS" id="CAA39455"/>
    </conflict>
</comment>